<dbReference type="EC" id="1.3.98.5" evidence="1"/>
<dbReference type="EMBL" id="BX571857">
    <property type="protein sequence ID" value="CAG42321.1"/>
    <property type="molecule type" value="Genomic_DNA"/>
</dbReference>
<dbReference type="SMR" id="Q6GBP9"/>
<dbReference type="KEGG" id="sas:SAS0546"/>
<dbReference type="HOGENOM" id="CLU_063226_1_0_9"/>
<dbReference type="UniPathway" id="UPA00252"/>
<dbReference type="GO" id="GO:0020037">
    <property type="term" value="F:heme binding"/>
    <property type="evidence" value="ECO:0007669"/>
    <property type="project" value="InterPro"/>
</dbReference>
<dbReference type="GO" id="GO:0046872">
    <property type="term" value="F:metal ion binding"/>
    <property type="evidence" value="ECO:0007669"/>
    <property type="project" value="UniProtKB-KW"/>
</dbReference>
<dbReference type="GO" id="GO:0016634">
    <property type="term" value="F:oxidoreductase activity, acting on the CH-CH group of donors, oxygen as acceptor"/>
    <property type="evidence" value="ECO:0007669"/>
    <property type="project" value="UniProtKB-UniRule"/>
</dbReference>
<dbReference type="GO" id="GO:0004601">
    <property type="term" value="F:peroxidase activity"/>
    <property type="evidence" value="ECO:0007669"/>
    <property type="project" value="InterPro"/>
</dbReference>
<dbReference type="GO" id="GO:0006785">
    <property type="term" value="P:heme B biosynthetic process"/>
    <property type="evidence" value="ECO:0007669"/>
    <property type="project" value="UniProtKB-UniRule"/>
</dbReference>
<dbReference type="Gene3D" id="3.30.70.1030">
    <property type="entry name" value="Apc35880, domain 1"/>
    <property type="match status" value="2"/>
</dbReference>
<dbReference type="HAMAP" id="MF_01442">
    <property type="entry name" value="Coproheme_decarbox_1"/>
    <property type="match status" value="1"/>
</dbReference>
<dbReference type="InterPro" id="IPR031332">
    <property type="entry name" value="CHDC"/>
</dbReference>
<dbReference type="InterPro" id="IPR010644">
    <property type="entry name" value="ChdC/CLD"/>
</dbReference>
<dbReference type="InterPro" id="IPR011008">
    <property type="entry name" value="Dimeric_a/b-barrel"/>
</dbReference>
<dbReference type="NCBIfam" id="NF008913">
    <property type="entry name" value="PRK12276.1"/>
    <property type="match status" value="1"/>
</dbReference>
<dbReference type="PANTHER" id="PTHR36843:SF1">
    <property type="entry name" value="COPROHEME DECARBOXYLASE"/>
    <property type="match status" value="1"/>
</dbReference>
<dbReference type="PANTHER" id="PTHR36843">
    <property type="entry name" value="HEME-DEPENDENT PEROXIDASE YWFI-RELATED"/>
    <property type="match status" value="1"/>
</dbReference>
<dbReference type="Pfam" id="PF06778">
    <property type="entry name" value="Chlor_dismutase"/>
    <property type="match status" value="1"/>
</dbReference>
<dbReference type="SUPFAM" id="SSF54909">
    <property type="entry name" value="Dimeric alpha+beta barrel"/>
    <property type="match status" value="1"/>
</dbReference>
<name>CHDC_STAAS</name>
<feature type="chain" id="PRO_0000294052" description="Coproheme decarboxylase">
    <location>
        <begin position="1"/>
        <end position="250"/>
    </location>
</feature>
<feature type="active site" evidence="1">
    <location>
        <position position="145"/>
    </location>
</feature>
<feature type="binding site" evidence="1">
    <location>
        <position position="131"/>
    </location>
    <ligand>
        <name>Fe-coproporphyrin III</name>
        <dbReference type="ChEBI" id="CHEBI:68438"/>
    </ligand>
</feature>
<feature type="binding site" evidence="1">
    <location>
        <begin position="145"/>
        <end position="149"/>
    </location>
    <ligand>
        <name>Fe-coproporphyrin III</name>
        <dbReference type="ChEBI" id="CHEBI:68438"/>
    </ligand>
</feature>
<feature type="binding site" description="axial binding residue" evidence="1">
    <location>
        <position position="172"/>
    </location>
    <ligand>
        <name>Fe-coproporphyrin III</name>
        <dbReference type="ChEBI" id="CHEBI:68438"/>
    </ligand>
    <ligandPart>
        <name>Fe</name>
        <dbReference type="ChEBI" id="CHEBI:18248"/>
    </ligandPart>
</feature>
<feature type="binding site" evidence="1">
    <location>
        <position position="185"/>
    </location>
    <ligand>
        <name>Fe-coproporphyrin III</name>
        <dbReference type="ChEBI" id="CHEBI:68438"/>
    </ligand>
</feature>
<keyword id="KW-0349">Heme</keyword>
<keyword id="KW-0350">Heme biosynthesis</keyword>
<keyword id="KW-0408">Iron</keyword>
<keyword id="KW-0479">Metal-binding</keyword>
<keyword id="KW-0560">Oxidoreductase</keyword>
<gene>
    <name evidence="1" type="primary">chdC</name>
    <name type="ordered locus">SAS0546</name>
</gene>
<protein>
    <recommendedName>
        <fullName evidence="1">Coproheme decarboxylase</fullName>
        <ecNumber evidence="1">1.3.98.5</ecNumber>
    </recommendedName>
    <alternativeName>
        <fullName evidence="1">Coproheme III oxidative decarboxylase</fullName>
    </alternativeName>
    <alternativeName>
        <fullName evidence="1">Hydrogen peroxide-dependent heme synthase</fullName>
    </alternativeName>
</protein>
<organism>
    <name type="scientific">Staphylococcus aureus (strain MSSA476)</name>
    <dbReference type="NCBI Taxonomy" id="282459"/>
    <lineage>
        <taxon>Bacteria</taxon>
        <taxon>Bacillati</taxon>
        <taxon>Bacillota</taxon>
        <taxon>Bacilli</taxon>
        <taxon>Bacillales</taxon>
        <taxon>Staphylococcaceae</taxon>
        <taxon>Staphylococcus</taxon>
    </lineage>
</organism>
<reference key="1">
    <citation type="journal article" date="2004" name="Proc. Natl. Acad. Sci. U.S.A.">
        <title>Complete genomes of two clinical Staphylococcus aureus strains: evidence for the rapid evolution of virulence and drug resistance.</title>
        <authorList>
            <person name="Holden M.T.G."/>
            <person name="Feil E.J."/>
            <person name="Lindsay J.A."/>
            <person name="Peacock S.J."/>
            <person name="Day N.P.J."/>
            <person name="Enright M.C."/>
            <person name="Foster T.J."/>
            <person name="Moore C.E."/>
            <person name="Hurst L."/>
            <person name="Atkin R."/>
            <person name="Barron A."/>
            <person name="Bason N."/>
            <person name="Bentley S.D."/>
            <person name="Chillingworth C."/>
            <person name="Chillingworth T."/>
            <person name="Churcher C."/>
            <person name="Clark L."/>
            <person name="Corton C."/>
            <person name="Cronin A."/>
            <person name="Doggett J."/>
            <person name="Dowd L."/>
            <person name="Feltwell T."/>
            <person name="Hance Z."/>
            <person name="Harris B."/>
            <person name="Hauser H."/>
            <person name="Holroyd S."/>
            <person name="Jagels K."/>
            <person name="James K.D."/>
            <person name="Lennard N."/>
            <person name="Line A."/>
            <person name="Mayes R."/>
            <person name="Moule S."/>
            <person name="Mungall K."/>
            <person name="Ormond D."/>
            <person name="Quail M.A."/>
            <person name="Rabbinowitsch E."/>
            <person name="Rutherford K.M."/>
            <person name="Sanders M."/>
            <person name="Sharp S."/>
            <person name="Simmonds M."/>
            <person name="Stevens K."/>
            <person name="Whitehead S."/>
            <person name="Barrell B.G."/>
            <person name="Spratt B.G."/>
            <person name="Parkhill J."/>
        </authorList>
    </citation>
    <scope>NUCLEOTIDE SEQUENCE [LARGE SCALE GENOMIC DNA]</scope>
    <source>
        <strain>MSSA476</strain>
    </source>
</reference>
<comment type="function">
    <text evidence="1">Involved in coproporphyrin-dependent heme b biosynthesis. Catalyzes the decarboxylation of Fe-coproporphyrin III (coproheme) to heme b (protoheme IX), the last step of the pathway. The reaction occurs in a stepwise manner with a three-propionate intermediate.</text>
</comment>
<comment type="catalytic activity">
    <reaction evidence="1">
        <text>Fe-coproporphyrin III + 2 H2O2 + 2 H(+) = heme b + 2 CO2 + 4 H2O</text>
        <dbReference type="Rhea" id="RHEA:56516"/>
        <dbReference type="ChEBI" id="CHEBI:15377"/>
        <dbReference type="ChEBI" id="CHEBI:15378"/>
        <dbReference type="ChEBI" id="CHEBI:16240"/>
        <dbReference type="ChEBI" id="CHEBI:16526"/>
        <dbReference type="ChEBI" id="CHEBI:60344"/>
        <dbReference type="ChEBI" id="CHEBI:68438"/>
        <dbReference type="EC" id="1.3.98.5"/>
    </reaction>
    <physiologicalReaction direction="left-to-right" evidence="1">
        <dbReference type="Rhea" id="RHEA:56517"/>
    </physiologicalReaction>
</comment>
<comment type="catalytic activity">
    <reaction evidence="1">
        <text>Fe-coproporphyrin III + H2O2 + H(+) = harderoheme III + CO2 + 2 H2O</text>
        <dbReference type="Rhea" id="RHEA:57940"/>
        <dbReference type="ChEBI" id="CHEBI:15377"/>
        <dbReference type="ChEBI" id="CHEBI:15378"/>
        <dbReference type="ChEBI" id="CHEBI:16240"/>
        <dbReference type="ChEBI" id="CHEBI:16526"/>
        <dbReference type="ChEBI" id="CHEBI:68438"/>
        <dbReference type="ChEBI" id="CHEBI:142463"/>
    </reaction>
    <physiologicalReaction direction="left-to-right" evidence="1">
        <dbReference type="Rhea" id="RHEA:57941"/>
    </physiologicalReaction>
</comment>
<comment type="catalytic activity">
    <reaction evidence="1">
        <text>harderoheme III + H2O2 + H(+) = heme b + CO2 + 2 H2O</text>
        <dbReference type="Rhea" id="RHEA:57944"/>
        <dbReference type="ChEBI" id="CHEBI:15377"/>
        <dbReference type="ChEBI" id="CHEBI:15378"/>
        <dbReference type="ChEBI" id="CHEBI:16240"/>
        <dbReference type="ChEBI" id="CHEBI:16526"/>
        <dbReference type="ChEBI" id="CHEBI:60344"/>
        <dbReference type="ChEBI" id="CHEBI:142463"/>
    </reaction>
    <physiologicalReaction direction="left-to-right" evidence="1">
        <dbReference type="Rhea" id="RHEA:57945"/>
    </physiologicalReaction>
</comment>
<comment type="cofactor">
    <cofactor evidence="1">
        <name>Fe-coproporphyrin III</name>
        <dbReference type="ChEBI" id="CHEBI:68438"/>
    </cofactor>
    <text evidence="1">Fe-coproporphyrin III acts both as a substrate and a redox cofactor.</text>
</comment>
<comment type="pathway">
    <text evidence="1">Porphyrin-containing compound metabolism; protoheme biosynthesis.</text>
</comment>
<comment type="similarity">
    <text evidence="1">Belongs to the ChdC family. Type 1 subfamily.</text>
</comment>
<sequence length="250" mass="29390">MSQAAETLDGWYSLHLFYAVDWASLRLVPKDERDALVTEFQSFLENTATVRSSKSGDQAIYNITGQKADLLLWFLRPEMKSLNHIENEFNKLRIADFLIPTYSYVSVIELSNYLAGKSDEDPYENPHIKARLYPELPHSDYICFYPMNKRRNETYNWYMLTMEERQKLMYDHGMIGRKYAGKIKQFITGSVGFDDFEWGVTLFSDDVLQFKKIVYEMRFDETTARYGEFGSFFVGHLINTNEFDQFFAIS</sequence>
<proteinExistence type="inferred from homology"/>
<accession>Q6GBP9</accession>
<evidence type="ECO:0000255" key="1">
    <source>
        <dbReference type="HAMAP-Rule" id="MF_01442"/>
    </source>
</evidence>